<reference key="1">
    <citation type="journal article" date="2007" name="PLoS Biol.">
        <title>Evolution of symbiotic bacteria in the distal human intestine.</title>
        <authorList>
            <person name="Xu J."/>
            <person name="Mahowald M.A."/>
            <person name="Ley R.E."/>
            <person name="Lozupone C.A."/>
            <person name="Hamady M."/>
            <person name="Martens E.C."/>
            <person name="Henrissat B."/>
            <person name="Coutinho P.M."/>
            <person name="Minx P."/>
            <person name="Latreille P."/>
            <person name="Cordum H."/>
            <person name="Van Brunt A."/>
            <person name="Kim K."/>
            <person name="Fulton R.S."/>
            <person name="Fulton L.A."/>
            <person name="Clifton S.W."/>
            <person name="Wilson R.K."/>
            <person name="Knight R.D."/>
            <person name="Gordon J.I."/>
        </authorList>
    </citation>
    <scope>NUCLEOTIDE SEQUENCE [LARGE SCALE GENOMIC DNA]</scope>
    <source>
        <strain>ATCC 8482 / DSM 1447 / JCM 5826 / CCUG 4940 / NBRC 14291 / NCTC 11154</strain>
    </source>
</reference>
<sequence length="375" mass="42803">MNNRDKRVLVGMSGGIDSSATCIMLQEQGYEVVGVTMRTWDVPSRFSTPGQDEPDDVLEARALAERLGIEHHVADVRKEFKQIIVKHFIDEYMQGRTPNPCVLCNPLFKERILCEWADQTNCAHISTGHYCRLEERKGKLYIVAGDDQTKDQSYFLWKLPQEILQRFLFPLGTYTKQEVREYLRQKGFEAKARGGESMEICFIEGDYRNFLRSQCPDIDTQVGPGWFVNSKGVKIGQHKGFPYYTIGQRKGLEIALGHPAYVLRINAEKNTVMLGDAEELKAEYMLVEDYHITEMQDLLQCKDLSVRIRYRSKPIPCQVLVLDEKQLLVRFLSEASAIAPGQSAVFYEGKRVLGGAFIASQRGIRKIAADNQDKF</sequence>
<accession>A6KZV1</accession>
<organism>
    <name type="scientific">Phocaeicola vulgatus (strain ATCC 8482 / DSM 1447 / JCM 5826 / CCUG 4940 / NBRC 14291 / NCTC 11154)</name>
    <name type="common">Bacteroides vulgatus</name>
    <dbReference type="NCBI Taxonomy" id="435590"/>
    <lineage>
        <taxon>Bacteria</taxon>
        <taxon>Pseudomonadati</taxon>
        <taxon>Bacteroidota</taxon>
        <taxon>Bacteroidia</taxon>
        <taxon>Bacteroidales</taxon>
        <taxon>Bacteroidaceae</taxon>
        <taxon>Phocaeicola</taxon>
    </lineage>
</organism>
<gene>
    <name evidence="1" type="primary">mnmA3</name>
    <name type="ordered locus">BVU_1275</name>
</gene>
<feature type="chain" id="PRO_0000349532" description="tRNA-specific 2-thiouridylase MnmA 3">
    <location>
        <begin position="1"/>
        <end position="375"/>
    </location>
</feature>
<feature type="region of interest" description="Interaction with tRNA" evidence="1">
    <location>
        <begin position="150"/>
        <end position="152"/>
    </location>
</feature>
<feature type="region of interest" description="Interaction with tRNA" evidence="1">
    <location>
        <begin position="309"/>
        <end position="310"/>
    </location>
</feature>
<feature type="active site" description="Nucleophile" evidence="1">
    <location>
        <position position="104"/>
    </location>
</feature>
<feature type="active site" description="Cysteine persulfide intermediate" evidence="1">
    <location>
        <position position="201"/>
    </location>
</feature>
<feature type="binding site" evidence="1">
    <location>
        <begin position="11"/>
        <end position="18"/>
    </location>
    <ligand>
        <name>ATP</name>
        <dbReference type="ChEBI" id="CHEBI:30616"/>
    </ligand>
</feature>
<feature type="binding site" evidence="1">
    <location>
        <position position="37"/>
    </location>
    <ligand>
        <name>ATP</name>
        <dbReference type="ChEBI" id="CHEBI:30616"/>
    </ligand>
</feature>
<feature type="binding site" evidence="1">
    <location>
        <position position="128"/>
    </location>
    <ligand>
        <name>ATP</name>
        <dbReference type="ChEBI" id="CHEBI:30616"/>
    </ligand>
</feature>
<feature type="site" description="Interaction with tRNA" evidence="1">
    <location>
        <position position="129"/>
    </location>
</feature>
<feature type="site" description="Interaction with tRNA" evidence="1">
    <location>
        <position position="342"/>
    </location>
</feature>
<feature type="disulfide bond" description="Alternate" evidence="1">
    <location>
        <begin position="104"/>
        <end position="201"/>
    </location>
</feature>
<comment type="function">
    <text evidence="1">Catalyzes the 2-thiolation of uridine at the wobble position (U34) of tRNA, leading to the formation of s(2)U34.</text>
</comment>
<comment type="catalytic activity">
    <reaction evidence="1">
        <text>S-sulfanyl-L-cysteinyl-[protein] + uridine(34) in tRNA + AH2 + ATP = 2-thiouridine(34) in tRNA + L-cysteinyl-[protein] + A + AMP + diphosphate + H(+)</text>
        <dbReference type="Rhea" id="RHEA:47032"/>
        <dbReference type="Rhea" id="RHEA-COMP:10131"/>
        <dbReference type="Rhea" id="RHEA-COMP:11726"/>
        <dbReference type="Rhea" id="RHEA-COMP:11727"/>
        <dbReference type="Rhea" id="RHEA-COMP:11728"/>
        <dbReference type="ChEBI" id="CHEBI:13193"/>
        <dbReference type="ChEBI" id="CHEBI:15378"/>
        <dbReference type="ChEBI" id="CHEBI:17499"/>
        <dbReference type="ChEBI" id="CHEBI:29950"/>
        <dbReference type="ChEBI" id="CHEBI:30616"/>
        <dbReference type="ChEBI" id="CHEBI:33019"/>
        <dbReference type="ChEBI" id="CHEBI:61963"/>
        <dbReference type="ChEBI" id="CHEBI:65315"/>
        <dbReference type="ChEBI" id="CHEBI:87170"/>
        <dbReference type="ChEBI" id="CHEBI:456215"/>
        <dbReference type="EC" id="2.8.1.13"/>
    </reaction>
</comment>
<comment type="subcellular location">
    <subcellularLocation>
        <location evidence="1">Cytoplasm</location>
    </subcellularLocation>
</comment>
<comment type="similarity">
    <text evidence="1">Belongs to the MnmA/TRMU family.</text>
</comment>
<keyword id="KW-0067">ATP-binding</keyword>
<keyword id="KW-0963">Cytoplasm</keyword>
<keyword id="KW-1015">Disulfide bond</keyword>
<keyword id="KW-0547">Nucleotide-binding</keyword>
<keyword id="KW-0694">RNA-binding</keyword>
<keyword id="KW-0808">Transferase</keyword>
<keyword id="KW-0819">tRNA processing</keyword>
<keyword id="KW-0820">tRNA-binding</keyword>
<protein>
    <recommendedName>
        <fullName evidence="1">tRNA-specific 2-thiouridylase MnmA 3</fullName>
        <ecNumber evidence="1">2.8.1.13</ecNumber>
    </recommendedName>
</protein>
<dbReference type="EC" id="2.8.1.13" evidence="1"/>
<dbReference type="EMBL" id="CP000139">
    <property type="protein sequence ID" value="ABR38965.1"/>
    <property type="molecule type" value="Genomic_DNA"/>
</dbReference>
<dbReference type="SMR" id="A6KZV1"/>
<dbReference type="STRING" id="435590.BVU_1275"/>
<dbReference type="PaxDb" id="435590-BVU_1275"/>
<dbReference type="KEGG" id="bvu:BVU_1275"/>
<dbReference type="eggNOG" id="COG0482">
    <property type="taxonomic scope" value="Bacteria"/>
</dbReference>
<dbReference type="HOGENOM" id="CLU_035188_1_0_10"/>
<dbReference type="BioCyc" id="BVUL435590:G1G59-1328-MONOMER"/>
<dbReference type="Proteomes" id="UP000002861">
    <property type="component" value="Chromosome"/>
</dbReference>
<dbReference type="GO" id="GO:0005737">
    <property type="term" value="C:cytoplasm"/>
    <property type="evidence" value="ECO:0007669"/>
    <property type="project" value="UniProtKB-SubCell"/>
</dbReference>
<dbReference type="GO" id="GO:0005524">
    <property type="term" value="F:ATP binding"/>
    <property type="evidence" value="ECO:0007669"/>
    <property type="project" value="UniProtKB-KW"/>
</dbReference>
<dbReference type="GO" id="GO:0000049">
    <property type="term" value="F:tRNA binding"/>
    <property type="evidence" value="ECO:0007669"/>
    <property type="project" value="UniProtKB-KW"/>
</dbReference>
<dbReference type="GO" id="GO:0103016">
    <property type="term" value="F:tRNA-uridine 2-sulfurtransferase activity"/>
    <property type="evidence" value="ECO:0007669"/>
    <property type="project" value="UniProtKB-EC"/>
</dbReference>
<dbReference type="GO" id="GO:0002143">
    <property type="term" value="P:tRNA wobble position uridine thiolation"/>
    <property type="evidence" value="ECO:0007669"/>
    <property type="project" value="TreeGrafter"/>
</dbReference>
<dbReference type="CDD" id="cd01998">
    <property type="entry name" value="MnmA_TRMU-like"/>
    <property type="match status" value="1"/>
</dbReference>
<dbReference type="FunFam" id="2.30.30.280:FF:000001">
    <property type="entry name" value="tRNA-specific 2-thiouridylase MnmA"/>
    <property type="match status" value="1"/>
</dbReference>
<dbReference type="Gene3D" id="2.30.30.280">
    <property type="entry name" value="Adenine nucleotide alpha hydrolases-like domains"/>
    <property type="match status" value="1"/>
</dbReference>
<dbReference type="Gene3D" id="3.40.50.620">
    <property type="entry name" value="HUPs"/>
    <property type="match status" value="1"/>
</dbReference>
<dbReference type="Gene3D" id="2.40.30.10">
    <property type="entry name" value="Translation factors"/>
    <property type="match status" value="1"/>
</dbReference>
<dbReference type="HAMAP" id="MF_00144">
    <property type="entry name" value="tRNA_thiouridyl_MnmA"/>
    <property type="match status" value="1"/>
</dbReference>
<dbReference type="InterPro" id="IPR004506">
    <property type="entry name" value="MnmA-like"/>
</dbReference>
<dbReference type="InterPro" id="IPR046885">
    <property type="entry name" value="MnmA-like_C"/>
</dbReference>
<dbReference type="InterPro" id="IPR046884">
    <property type="entry name" value="MnmA-like_central"/>
</dbReference>
<dbReference type="InterPro" id="IPR023382">
    <property type="entry name" value="MnmA-like_central_sf"/>
</dbReference>
<dbReference type="InterPro" id="IPR014729">
    <property type="entry name" value="Rossmann-like_a/b/a_fold"/>
</dbReference>
<dbReference type="NCBIfam" id="NF001138">
    <property type="entry name" value="PRK00143.1"/>
    <property type="match status" value="1"/>
</dbReference>
<dbReference type="NCBIfam" id="NF011258">
    <property type="entry name" value="PRK14664.1"/>
    <property type="match status" value="1"/>
</dbReference>
<dbReference type="NCBIfam" id="TIGR00420">
    <property type="entry name" value="trmU"/>
    <property type="match status" value="1"/>
</dbReference>
<dbReference type="PANTHER" id="PTHR11933:SF5">
    <property type="entry name" value="MITOCHONDRIAL TRNA-SPECIFIC 2-THIOURIDYLASE 1"/>
    <property type="match status" value="1"/>
</dbReference>
<dbReference type="PANTHER" id="PTHR11933">
    <property type="entry name" value="TRNA 5-METHYLAMINOMETHYL-2-THIOURIDYLATE -METHYLTRANSFERASE"/>
    <property type="match status" value="1"/>
</dbReference>
<dbReference type="Pfam" id="PF03054">
    <property type="entry name" value="tRNA_Me_trans"/>
    <property type="match status" value="1"/>
</dbReference>
<dbReference type="Pfam" id="PF20258">
    <property type="entry name" value="tRNA_Me_trans_C"/>
    <property type="match status" value="1"/>
</dbReference>
<dbReference type="Pfam" id="PF20259">
    <property type="entry name" value="tRNA_Me_trans_M"/>
    <property type="match status" value="1"/>
</dbReference>
<dbReference type="SUPFAM" id="SSF52402">
    <property type="entry name" value="Adenine nucleotide alpha hydrolases-like"/>
    <property type="match status" value="1"/>
</dbReference>
<proteinExistence type="inferred from homology"/>
<name>MNMA3_PHOV8</name>
<evidence type="ECO:0000255" key="1">
    <source>
        <dbReference type="HAMAP-Rule" id="MF_00144"/>
    </source>
</evidence>